<protein>
    <recommendedName>
        <fullName>Kelch-like protein 21</fullName>
    </recommendedName>
</protein>
<comment type="function">
    <text evidence="1">Substrate-specific adapter of BCR (BTB-CUL3-RBX1) E3 ubiquitin-protein ligase complex required for efficient chromosome alignment and cytokinesis. The BCR(KLHL21) E3 ubiquitin ligase complex regulates localization of the chromosomal passenger complex (CPC) from chromosomes to the spindle midzone in anaphase and mediates the ubiquitination of AURKB. Ubiquitination of AURKB by BCR(KLHL21) E3 ubiquitin ligase complex may not lead to its degradation by the proteasome (By similarity).</text>
</comment>
<comment type="pathway">
    <text>Protein modification; protein ubiquitination.</text>
</comment>
<comment type="subunit">
    <text evidence="1">Component of the BCR(KLHL21) E3 ubiquitin ligase complex, at least composed of CUL3, KLHL21 and RBX1.</text>
</comment>
<comment type="subcellular location">
    <subcellularLocation>
        <location evidence="1">Cytoplasm</location>
        <location evidence="1">Cytoskeleton</location>
        <location evidence="1">Spindle</location>
    </subcellularLocation>
    <text evidence="1">Localizes to the spindle midzone and targets CUL3 to this region.</text>
</comment>
<sequence>MERPAPLAVLPFSDPAHALSLLRGLSQLRAERKFLDVTLEAAGGRDFPAHRAVLAAASPYFRAMFAGQLRESRAERVRLHGVPPDMLQLLLDFSYTGRVAVSGDNAEPLLRAADLLQFPAVKEACGAFLQQQLDLANCLDMQDFAEAFSCSGLASAAQRFILRHVGELGAEQLERLPLARLLRYLRDDGLCVPKEEAAYQLALRWVRADPPRRAAHWPQLLEAVRLPFVRRFYLLAHVEAEPLVARCPPCLRLLREARDFQAARYDRHDRGPCPRMRPRPSTGLAEILVLVGGCDQDCDELVTVDCYNPQTGQWRYLAEFPDHLGGGYSIVALGNDIYVTGGSDGSRLYDCVWRYNSSVNEWTEVAPMLKAREYHSSSVLNGLLYVVAADSTERYDHATDSWEALQPMTYPMDNCSTTACRGRLYAIGSLAGKETMVIQCYDPDTDLWSMVNCGQLPPWSFAPKTVTLNGLMYFVRDDSAEVDVYNPTKDEWDKIPSMNQVHVGGSLAALGGKLYVSGGYDNTFELSDVVEAYDPETRAWSVVGRLPEPTFWHGSVSIFRQFMPQTPAGGRGFELNSGSSDVDAGHHRLPQNPEELQ</sequence>
<keyword id="KW-0131">Cell cycle</keyword>
<keyword id="KW-0132">Cell division</keyword>
<keyword id="KW-0963">Cytoplasm</keyword>
<keyword id="KW-0206">Cytoskeleton</keyword>
<keyword id="KW-0880">Kelch repeat</keyword>
<keyword id="KW-0498">Mitosis</keyword>
<keyword id="KW-1185">Reference proteome</keyword>
<keyword id="KW-0677">Repeat</keyword>
<keyword id="KW-0833">Ubl conjugation pathway</keyword>
<organism>
    <name type="scientific">Rattus norvegicus</name>
    <name type="common">Rat</name>
    <dbReference type="NCBI Taxonomy" id="10116"/>
    <lineage>
        <taxon>Eukaryota</taxon>
        <taxon>Metazoa</taxon>
        <taxon>Chordata</taxon>
        <taxon>Craniata</taxon>
        <taxon>Vertebrata</taxon>
        <taxon>Euteleostomi</taxon>
        <taxon>Mammalia</taxon>
        <taxon>Eutheria</taxon>
        <taxon>Euarchontoglires</taxon>
        <taxon>Glires</taxon>
        <taxon>Rodentia</taxon>
        <taxon>Myomorpha</taxon>
        <taxon>Muroidea</taxon>
        <taxon>Muridae</taxon>
        <taxon>Murinae</taxon>
        <taxon>Rattus</taxon>
    </lineage>
</organism>
<feature type="chain" id="PRO_0000396631" description="Kelch-like protein 21">
    <location>
        <begin position="1"/>
        <end position="597"/>
    </location>
</feature>
<feature type="domain" description="BTB" evidence="2">
    <location>
        <begin position="35"/>
        <end position="103"/>
    </location>
</feature>
<feature type="domain" description="BACK">
    <location>
        <begin position="138"/>
        <end position="239"/>
    </location>
</feature>
<feature type="repeat" description="Kelch 1">
    <location>
        <begin position="287"/>
        <end position="335"/>
    </location>
</feature>
<feature type="repeat" description="Kelch 2">
    <location>
        <begin position="336"/>
        <end position="382"/>
    </location>
</feature>
<feature type="repeat" description="Kelch 3">
    <location>
        <begin position="384"/>
        <end position="422"/>
    </location>
</feature>
<feature type="repeat" description="Kelch 4">
    <location>
        <begin position="423"/>
        <end position="470"/>
    </location>
</feature>
<feature type="repeat" description="Kelch 5">
    <location>
        <begin position="472"/>
        <end position="512"/>
    </location>
</feature>
<feature type="repeat" description="Kelch 6">
    <location>
        <begin position="513"/>
        <end position="560"/>
    </location>
</feature>
<feature type="region of interest" description="Disordered" evidence="3">
    <location>
        <begin position="570"/>
        <end position="597"/>
    </location>
</feature>
<reference key="1">
    <citation type="submission" date="2005-07" db="EMBL/GenBank/DDBJ databases">
        <authorList>
            <person name="Mural R.J."/>
            <person name="Adams M.D."/>
            <person name="Myers E.W."/>
            <person name="Smith H.O."/>
            <person name="Venter J.C."/>
        </authorList>
    </citation>
    <scope>NUCLEOTIDE SEQUENCE [LARGE SCALE GENOMIC DNA]</scope>
    <source>
        <strain>Brown Norway</strain>
    </source>
</reference>
<evidence type="ECO:0000250" key="1"/>
<evidence type="ECO:0000255" key="2">
    <source>
        <dbReference type="PROSITE-ProRule" id="PRU00037"/>
    </source>
</evidence>
<evidence type="ECO:0000256" key="3">
    <source>
        <dbReference type="SAM" id="MobiDB-lite"/>
    </source>
</evidence>
<accession>D4A2K4</accession>
<name>KLH21_RAT</name>
<proteinExistence type="inferred from homology"/>
<dbReference type="EMBL" id="CH473968">
    <property type="protein sequence ID" value="EDL81211.1"/>
    <property type="molecule type" value="Genomic_DNA"/>
</dbReference>
<dbReference type="RefSeq" id="NP_001101466.1">
    <property type="nucleotide sequence ID" value="NM_001107996.1"/>
</dbReference>
<dbReference type="SMR" id="D4A2K4"/>
<dbReference type="FunCoup" id="D4A2K4">
    <property type="interactions" value="125"/>
</dbReference>
<dbReference type="STRING" id="10116.ENSRNOP00000004508"/>
<dbReference type="PhosphoSitePlus" id="D4A2K4"/>
<dbReference type="PaxDb" id="10116-ENSRNOP00000004508"/>
<dbReference type="Ensembl" id="ENSRNOT00000004508.6">
    <property type="protein sequence ID" value="ENSRNOP00000004508.5"/>
    <property type="gene ID" value="ENSRNOG00000003334.6"/>
</dbReference>
<dbReference type="GeneID" id="313743"/>
<dbReference type="KEGG" id="rno:313743"/>
<dbReference type="UCSC" id="RGD:1305863">
    <property type="organism name" value="rat"/>
</dbReference>
<dbReference type="AGR" id="RGD:1305863"/>
<dbReference type="CTD" id="9903"/>
<dbReference type="RGD" id="1305863">
    <property type="gene designation" value="Klhl21"/>
</dbReference>
<dbReference type="eggNOG" id="KOG4441">
    <property type="taxonomic scope" value="Eukaryota"/>
</dbReference>
<dbReference type="GeneTree" id="ENSGT00940000158631"/>
<dbReference type="HOGENOM" id="CLU_004253_14_6_1"/>
<dbReference type="InParanoid" id="D4A2K4"/>
<dbReference type="OMA" id="TWSVVGQ"/>
<dbReference type="OrthoDB" id="45365at2759"/>
<dbReference type="PhylomeDB" id="D4A2K4"/>
<dbReference type="TreeFam" id="TF329218"/>
<dbReference type="Reactome" id="R-RNO-8951664">
    <property type="pathway name" value="Neddylation"/>
</dbReference>
<dbReference type="Reactome" id="R-RNO-983168">
    <property type="pathway name" value="Antigen processing: Ubiquitination &amp; Proteasome degradation"/>
</dbReference>
<dbReference type="UniPathway" id="UPA00143"/>
<dbReference type="PRO" id="PR:D4A2K4"/>
<dbReference type="Proteomes" id="UP000002494">
    <property type="component" value="Chromosome 5"/>
</dbReference>
<dbReference type="Proteomes" id="UP000234681">
    <property type="component" value="Chromosome 5"/>
</dbReference>
<dbReference type="Bgee" id="ENSRNOG00000003334">
    <property type="expression patterns" value="Expressed in skeletal muscle tissue and 19 other cell types or tissues"/>
</dbReference>
<dbReference type="GO" id="GO:0031463">
    <property type="term" value="C:Cul3-RING ubiquitin ligase complex"/>
    <property type="evidence" value="ECO:0000250"/>
    <property type="project" value="UniProtKB"/>
</dbReference>
<dbReference type="GO" id="GO:0005737">
    <property type="term" value="C:cytoplasm"/>
    <property type="evidence" value="ECO:0000318"/>
    <property type="project" value="GO_Central"/>
</dbReference>
<dbReference type="GO" id="GO:0005827">
    <property type="term" value="C:polar microtubule"/>
    <property type="evidence" value="ECO:0000250"/>
    <property type="project" value="UniProtKB"/>
</dbReference>
<dbReference type="GO" id="GO:0097602">
    <property type="term" value="F:cullin family protein binding"/>
    <property type="evidence" value="ECO:0000266"/>
    <property type="project" value="RGD"/>
</dbReference>
<dbReference type="GO" id="GO:1990756">
    <property type="term" value="F:ubiquitin-like ligase-substrate adaptor activity"/>
    <property type="evidence" value="ECO:0000318"/>
    <property type="project" value="GO_Central"/>
</dbReference>
<dbReference type="GO" id="GO:0004842">
    <property type="term" value="F:ubiquitin-protein transferase activity"/>
    <property type="evidence" value="ECO:0007669"/>
    <property type="project" value="Ensembl"/>
</dbReference>
<dbReference type="GO" id="GO:0051301">
    <property type="term" value="P:cell division"/>
    <property type="evidence" value="ECO:0007669"/>
    <property type="project" value="UniProtKB-KW"/>
</dbReference>
<dbReference type="GO" id="GO:0035853">
    <property type="term" value="P:chromosome passenger complex localization to spindle midzone"/>
    <property type="evidence" value="ECO:0000250"/>
    <property type="project" value="UniProtKB"/>
</dbReference>
<dbReference type="GO" id="GO:0043161">
    <property type="term" value="P:proteasome-mediated ubiquitin-dependent protein catabolic process"/>
    <property type="evidence" value="ECO:0000318"/>
    <property type="project" value="GO_Central"/>
</dbReference>
<dbReference type="GO" id="GO:0016567">
    <property type="term" value="P:protein ubiquitination"/>
    <property type="evidence" value="ECO:0000250"/>
    <property type="project" value="UniProtKB"/>
</dbReference>
<dbReference type="GO" id="GO:0032465">
    <property type="term" value="P:regulation of cytokinesis"/>
    <property type="evidence" value="ECO:0000250"/>
    <property type="project" value="UniProtKB"/>
</dbReference>
<dbReference type="CDD" id="cd18460">
    <property type="entry name" value="BACK_KLHL21"/>
    <property type="match status" value="1"/>
</dbReference>
<dbReference type="CDD" id="cd18250">
    <property type="entry name" value="BTB_POZ_KLHL21"/>
    <property type="match status" value="1"/>
</dbReference>
<dbReference type="FunFam" id="1.25.40.420:FF:000001">
    <property type="entry name" value="Kelch-like family member 12"/>
    <property type="match status" value="1"/>
</dbReference>
<dbReference type="FunFam" id="3.30.710.10:FF:000001">
    <property type="entry name" value="Kelch-like family member 20"/>
    <property type="match status" value="1"/>
</dbReference>
<dbReference type="FunFam" id="2.120.10.80:FF:000044">
    <property type="entry name" value="Kelch-like family member 21"/>
    <property type="match status" value="1"/>
</dbReference>
<dbReference type="Gene3D" id="1.25.40.420">
    <property type="match status" value="1"/>
</dbReference>
<dbReference type="Gene3D" id="2.120.10.80">
    <property type="entry name" value="Kelch-type beta propeller"/>
    <property type="match status" value="1"/>
</dbReference>
<dbReference type="Gene3D" id="3.30.710.10">
    <property type="entry name" value="Potassium Channel Kv1.1, Chain A"/>
    <property type="match status" value="1"/>
</dbReference>
<dbReference type="InterPro" id="IPR011705">
    <property type="entry name" value="BACK"/>
</dbReference>
<dbReference type="InterPro" id="IPR017096">
    <property type="entry name" value="BTB-kelch_protein"/>
</dbReference>
<dbReference type="InterPro" id="IPR000210">
    <property type="entry name" value="BTB/POZ_dom"/>
</dbReference>
<dbReference type="InterPro" id="IPR030577">
    <property type="entry name" value="BTB/POZ_KLHL21"/>
</dbReference>
<dbReference type="InterPro" id="IPR015915">
    <property type="entry name" value="Kelch-typ_b-propeller"/>
</dbReference>
<dbReference type="InterPro" id="IPR006652">
    <property type="entry name" value="Kelch_1"/>
</dbReference>
<dbReference type="InterPro" id="IPR047069">
    <property type="entry name" value="KLHL21_BACK"/>
</dbReference>
<dbReference type="InterPro" id="IPR011333">
    <property type="entry name" value="SKP1/BTB/POZ_sf"/>
</dbReference>
<dbReference type="PANTHER" id="PTHR45632:SF17">
    <property type="entry name" value="KELCH-LIKE PROTEIN 31"/>
    <property type="match status" value="1"/>
</dbReference>
<dbReference type="PANTHER" id="PTHR45632">
    <property type="entry name" value="LD33804P"/>
    <property type="match status" value="1"/>
</dbReference>
<dbReference type="Pfam" id="PF07707">
    <property type="entry name" value="BACK"/>
    <property type="match status" value="1"/>
</dbReference>
<dbReference type="Pfam" id="PF00651">
    <property type="entry name" value="BTB"/>
    <property type="match status" value="1"/>
</dbReference>
<dbReference type="Pfam" id="PF01344">
    <property type="entry name" value="Kelch_1"/>
    <property type="match status" value="2"/>
</dbReference>
<dbReference type="Pfam" id="PF13964">
    <property type="entry name" value="Kelch_6"/>
    <property type="match status" value="1"/>
</dbReference>
<dbReference type="PIRSF" id="PIRSF037037">
    <property type="entry name" value="Kelch-like_protein_gigaxonin"/>
    <property type="match status" value="1"/>
</dbReference>
<dbReference type="SMART" id="SM00875">
    <property type="entry name" value="BACK"/>
    <property type="match status" value="1"/>
</dbReference>
<dbReference type="SMART" id="SM00225">
    <property type="entry name" value="BTB"/>
    <property type="match status" value="1"/>
</dbReference>
<dbReference type="SMART" id="SM00612">
    <property type="entry name" value="Kelch"/>
    <property type="match status" value="5"/>
</dbReference>
<dbReference type="SUPFAM" id="SSF117281">
    <property type="entry name" value="Kelch motif"/>
    <property type="match status" value="1"/>
</dbReference>
<dbReference type="SUPFAM" id="SSF54695">
    <property type="entry name" value="POZ domain"/>
    <property type="match status" value="1"/>
</dbReference>
<dbReference type="PROSITE" id="PS50097">
    <property type="entry name" value="BTB"/>
    <property type="match status" value="1"/>
</dbReference>
<gene>
    <name type="primary">Klhl21</name>
</gene>